<name>PPE30_MYCTO</name>
<dbReference type="EMBL" id="AE000516">
    <property type="protein sequence ID" value="AAK46123.1"/>
    <property type="molecule type" value="Genomic_DNA"/>
</dbReference>
<dbReference type="PIR" id="C70931">
    <property type="entry name" value="C70931"/>
</dbReference>
<dbReference type="RefSeq" id="WP_003917533.1">
    <property type="nucleotide sequence ID" value="NC_002755.2"/>
</dbReference>
<dbReference type="SMR" id="P9WI06"/>
<dbReference type="KEGG" id="mtc:MT1851"/>
<dbReference type="PATRIC" id="fig|83331.31.peg.1993"/>
<dbReference type="HOGENOM" id="CLU_000243_0_1_11"/>
<dbReference type="Proteomes" id="UP000001020">
    <property type="component" value="Chromosome"/>
</dbReference>
<dbReference type="GO" id="GO:0052572">
    <property type="term" value="P:response to host immune response"/>
    <property type="evidence" value="ECO:0007669"/>
    <property type="project" value="TreeGrafter"/>
</dbReference>
<dbReference type="FunFam" id="1.20.1260.20:FF:000001">
    <property type="entry name" value="PPE family protein PPE41"/>
    <property type="match status" value="1"/>
</dbReference>
<dbReference type="Gene3D" id="1.20.1260.20">
    <property type="entry name" value="PPE superfamily"/>
    <property type="match status" value="1"/>
</dbReference>
<dbReference type="InterPro" id="IPR022171">
    <property type="entry name" value="PPE_C"/>
</dbReference>
<dbReference type="InterPro" id="IPR000030">
    <property type="entry name" value="PPE_dom"/>
</dbReference>
<dbReference type="InterPro" id="IPR038332">
    <property type="entry name" value="PPE_sf"/>
</dbReference>
<dbReference type="PANTHER" id="PTHR46766">
    <property type="entry name" value="GLUTAMINE-RICH PROTEIN 2"/>
    <property type="match status" value="1"/>
</dbReference>
<dbReference type="PANTHER" id="PTHR46766:SF1">
    <property type="entry name" value="GLUTAMINE-RICH PROTEIN 2"/>
    <property type="match status" value="1"/>
</dbReference>
<dbReference type="Pfam" id="PF00823">
    <property type="entry name" value="PPE"/>
    <property type="match status" value="1"/>
</dbReference>
<dbReference type="Pfam" id="PF12484">
    <property type="entry name" value="PPE-SVP"/>
    <property type="match status" value="1"/>
</dbReference>
<dbReference type="SUPFAM" id="SSF140459">
    <property type="entry name" value="PE/PPE dimer-like"/>
    <property type="match status" value="1"/>
</dbReference>
<sequence>MDFGVLPPEINSGRMYAGPGSGPMLAAAAAWDGLATELQSTAADYGSVISVLTGVWSGQSSGTMAAAAAPYVAWMSATAALAREAAAQASAAAAAYEAAFAATVPPPVVAANRAELAVLAATNIFGQNTGAIAAAEARYAEMWAQDAAAMYGYAGSSSVATQVTPFAAPPPTTNAAGLATQGVAVAQAVGASAGNARSLVSEVLEFLATAGTNYNKTVASLMNAVTGVPYASSVYNSMLGLGFAESKMVLPANDTVISTIFGMVQFQKFFNPVTPFNPDLIPKSALGAGLGLRSAISSGLGSTAPAISAGASQAGSVGGMSVPPSWAAATPAIRTVAAVFSSTGLQAVPAAAISEGSLLSQMALASVAGGALGGAAARATGGFLGGGRVTAVKKSLKDSDLPDKLRRVVAHMMEKPESVQHWHTDEDGLDDLLAELKKKPGIHAVHMAGGNKAEIAPTISESG</sequence>
<evidence type="ECO:0000305" key="1"/>
<keyword id="KW-1185">Reference proteome</keyword>
<gene>
    <name type="primary">PPE30</name>
    <name type="ordered locus">MT1851</name>
</gene>
<proteinExistence type="inferred from homology"/>
<comment type="similarity">
    <text evidence="1">Belongs to the mycobacterial PPE family.</text>
</comment>
<organism>
    <name type="scientific">Mycobacterium tuberculosis (strain CDC 1551 / Oshkosh)</name>
    <dbReference type="NCBI Taxonomy" id="83331"/>
    <lineage>
        <taxon>Bacteria</taxon>
        <taxon>Bacillati</taxon>
        <taxon>Actinomycetota</taxon>
        <taxon>Actinomycetes</taxon>
        <taxon>Mycobacteriales</taxon>
        <taxon>Mycobacteriaceae</taxon>
        <taxon>Mycobacterium</taxon>
        <taxon>Mycobacterium tuberculosis complex</taxon>
    </lineage>
</organism>
<accession>P9WI06</accession>
<accession>L0T7Y1</accession>
<accession>O53951</accession>
<accession>P0A692</accession>
<feature type="chain" id="PRO_0000428090" description="Uncharacterized PPE family protein PPE30">
    <location>
        <begin position="1"/>
        <end position="463"/>
    </location>
</feature>
<protein>
    <recommendedName>
        <fullName>Uncharacterized PPE family protein PPE30</fullName>
    </recommendedName>
</protein>
<reference key="1">
    <citation type="journal article" date="2002" name="J. Bacteriol.">
        <title>Whole-genome comparison of Mycobacterium tuberculosis clinical and laboratory strains.</title>
        <authorList>
            <person name="Fleischmann R.D."/>
            <person name="Alland D."/>
            <person name="Eisen J.A."/>
            <person name="Carpenter L."/>
            <person name="White O."/>
            <person name="Peterson J.D."/>
            <person name="DeBoy R.T."/>
            <person name="Dodson R.J."/>
            <person name="Gwinn M.L."/>
            <person name="Haft D.H."/>
            <person name="Hickey E.K."/>
            <person name="Kolonay J.F."/>
            <person name="Nelson W.C."/>
            <person name="Umayam L.A."/>
            <person name="Ermolaeva M.D."/>
            <person name="Salzberg S.L."/>
            <person name="Delcher A."/>
            <person name="Utterback T.R."/>
            <person name="Weidman J.F."/>
            <person name="Khouri H.M."/>
            <person name="Gill J."/>
            <person name="Mikula A."/>
            <person name="Bishai W."/>
            <person name="Jacobs W.R. Jr."/>
            <person name="Venter J.C."/>
            <person name="Fraser C.M."/>
        </authorList>
    </citation>
    <scope>NUCLEOTIDE SEQUENCE [LARGE SCALE GENOMIC DNA]</scope>
    <source>
        <strain>CDC 1551 / Oshkosh</strain>
    </source>
</reference>